<gene>
    <name evidence="1" type="primary">tsaD</name>
    <name type="synonym">gcp</name>
    <name type="ordered locus">CYA_0297</name>
</gene>
<reference key="1">
    <citation type="journal article" date="2007" name="ISME J.">
        <title>Population level functional diversity in a microbial community revealed by comparative genomic and metagenomic analyses.</title>
        <authorList>
            <person name="Bhaya D."/>
            <person name="Grossman A.R."/>
            <person name="Steunou A.-S."/>
            <person name="Khuri N."/>
            <person name="Cohan F.M."/>
            <person name="Hamamura N."/>
            <person name="Melendrez M.C."/>
            <person name="Bateson M.M."/>
            <person name="Ward D.M."/>
            <person name="Heidelberg J.F."/>
        </authorList>
    </citation>
    <scope>NUCLEOTIDE SEQUENCE [LARGE SCALE GENOMIC DNA]</scope>
    <source>
        <strain>JA-3-3Ab</strain>
    </source>
</reference>
<organism>
    <name type="scientific">Synechococcus sp. (strain JA-3-3Ab)</name>
    <name type="common">Cyanobacteria bacterium Yellowstone A-Prime</name>
    <dbReference type="NCBI Taxonomy" id="321327"/>
    <lineage>
        <taxon>Bacteria</taxon>
        <taxon>Bacillati</taxon>
        <taxon>Cyanobacteriota</taxon>
        <taxon>Cyanophyceae</taxon>
        <taxon>Synechococcales</taxon>
        <taxon>Synechococcaceae</taxon>
        <taxon>Synechococcus</taxon>
    </lineage>
</organism>
<feature type="chain" id="PRO_0000303587" description="tRNA N6-adenosine threonylcarbamoyltransferase">
    <location>
        <begin position="1"/>
        <end position="366"/>
    </location>
</feature>
<feature type="binding site" evidence="1">
    <location>
        <position position="119"/>
    </location>
    <ligand>
        <name>Fe cation</name>
        <dbReference type="ChEBI" id="CHEBI:24875"/>
    </ligand>
</feature>
<feature type="binding site" evidence="1">
    <location>
        <position position="123"/>
    </location>
    <ligand>
        <name>Fe cation</name>
        <dbReference type="ChEBI" id="CHEBI:24875"/>
    </ligand>
</feature>
<feature type="binding site" evidence="1">
    <location>
        <begin position="142"/>
        <end position="146"/>
    </location>
    <ligand>
        <name>substrate</name>
    </ligand>
</feature>
<feature type="binding site" evidence="1">
    <location>
        <position position="175"/>
    </location>
    <ligand>
        <name>substrate</name>
    </ligand>
</feature>
<feature type="binding site" evidence="1">
    <location>
        <position position="188"/>
    </location>
    <ligand>
        <name>substrate</name>
    </ligand>
</feature>
<feature type="binding site" evidence="1">
    <location>
        <position position="192"/>
    </location>
    <ligand>
        <name>substrate</name>
    </ligand>
</feature>
<feature type="binding site" evidence="1">
    <location>
        <position position="281"/>
    </location>
    <ligand>
        <name>substrate</name>
    </ligand>
</feature>
<feature type="binding site" evidence="1">
    <location>
        <position position="309"/>
    </location>
    <ligand>
        <name>Fe cation</name>
        <dbReference type="ChEBI" id="CHEBI:24875"/>
    </ligand>
</feature>
<name>TSAD_SYNJA</name>
<protein>
    <recommendedName>
        <fullName evidence="1">tRNA N6-adenosine threonylcarbamoyltransferase</fullName>
        <ecNumber evidence="1">2.3.1.234</ecNumber>
    </recommendedName>
    <alternativeName>
        <fullName evidence="1">N6-L-threonylcarbamoyladenine synthase</fullName>
        <shortName evidence="1">t(6)A synthase</shortName>
    </alternativeName>
    <alternativeName>
        <fullName evidence="1">t(6)A37 threonylcarbamoyladenosine biosynthesis protein TsaD</fullName>
    </alternativeName>
    <alternativeName>
        <fullName evidence="1">tRNA threonylcarbamoyladenosine biosynthesis protein TsaD</fullName>
    </alternativeName>
</protein>
<accession>Q2JXG9</accession>
<proteinExistence type="inferred from homology"/>
<dbReference type="EC" id="2.3.1.234" evidence="1"/>
<dbReference type="EMBL" id="CP000239">
    <property type="protein sequence ID" value="ABC98517.1"/>
    <property type="molecule type" value="Genomic_DNA"/>
</dbReference>
<dbReference type="RefSeq" id="WP_011429206.1">
    <property type="nucleotide sequence ID" value="NC_007775.1"/>
</dbReference>
<dbReference type="SMR" id="Q2JXG9"/>
<dbReference type="STRING" id="321327.CYA_0297"/>
<dbReference type="KEGG" id="cya:CYA_0297"/>
<dbReference type="eggNOG" id="COG0533">
    <property type="taxonomic scope" value="Bacteria"/>
</dbReference>
<dbReference type="HOGENOM" id="CLU_023208_0_2_3"/>
<dbReference type="OrthoDB" id="9806197at2"/>
<dbReference type="Proteomes" id="UP000008818">
    <property type="component" value="Chromosome"/>
</dbReference>
<dbReference type="GO" id="GO:0005737">
    <property type="term" value="C:cytoplasm"/>
    <property type="evidence" value="ECO:0007669"/>
    <property type="project" value="UniProtKB-SubCell"/>
</dbReference>
<dbReference type="GO" id="GO:0005506">
    <property type="term" value="F:iron ion binding"/>
    <property type="evidence" value="ECO:0007669"/>
    <property type="project" value="UniProtKB-UniRule"/>
</dbReference>
<dbReference type="GO" id="GO:0061711">
    <property type="term" value="F:N(6)-L-threonylcarbamoyladenine synthase activity"/>
    <property type="evidence" value="ECO:0007669"/>
    <property type="project" value="UniProtKB-EC"/>
</dbReference>
<dbReference type="GO" id="GO:0002949">
    <property type="term" value="P:tRNA threonylcarbamoyladenosine modification"/>
    <property type="evidence" value="ECO:0007669"/>
    <property type="project" value="UniProtKB-UniRule"/>
</dbReference>
<dbReference type="CDD" id="cd24133">
    <property type="entry name" value="ASKHA_NBD_TsaD_bac"/>
    <property type="match status" value="1"/>
</dbReference>
<dbReference type="FunFam" id="3.30.420.40:FF:000012">
    <property type="entry name" value="tRNA N6-adenosine threonylcarbamoyltransferase"/>
    <property type="match status" value="1"/>
</dbReference>
<dbReference type="FunFam" id="3.30.420.40:FF:000040">
    <property type="entry name" value="tRNA N6-adenosine threonylcarbamoyltransferase"/>
    <property type="match status" value="1"/>
</dbReference>
<dbReference type="Gene3D" id="3.30.420.40">
    <property type="match status" value="2"/>
</dbReference>
<dbReference type="HAMAP" id="MF_01445">
    <property type="entry name" value="TsaD"/>
    <property type="match status" value="1"/>
</dbReference>
<dbReference type="InterPro" id="IPR043129">
    <property type="entry name" value="ATPase_NBD"/>
</dbReference>
<dbReference type="InterPro" id="IPR000905">
    <property type="entry name" value="Gcp-like_dom"/>
</dbReference>
<dbReference type="InterPro" id="IPR017861">
    <property type="entry name" value="KAE1/TsaD"/>
</dbReference>
<dbReference type="InterPro" id="IPR017860">
    <property type="entry name" value="Peptidase_M22_CS"/>
</dbReference>
<dbReference type="InterPro" id="IPR022450">
    <property type="entry name" value="TsaD"/>
</dbReference>
<dbReference type="NCBIfam" id="TIGR00329">
    <property type="entry name" value="gcp_kae1"/>
    <property type="match status" value="1"/>
</dbReference>
<dbReference type="NCBIfam" id="TIGR03723">
    <property type="entry name" value="T6A_TsaD_YgjD"/>
    <property type="match status" value="1"/>
</dbReference>
<dbReference type="PANTHER" id="PTHR11735">
    <property type="entry name" value="TRNA N6-ADENOSINE THREONYLCARBAMOYLTRANSFERASE"/>
    <property type="match status" value="1"/>
</dbReference>
<dbReference type="PANTHER" id="PTHR11735:SF6">
    <property type="entry name" value="TRNA N6-ADENOSINE THREONYLCARBAMOYLTRANSFERASE, MITOCHONDRIAL"/>
    <property type="match status" value="1"/>
</dbReference>
<dbReference type="Pfam" id="PF00814">
    <property type="entry name" value="TsaD"/>
    <property type="match status" value="1"/>
</dbReference>
<dbReference type="PRINTS" id="PR00789">
    <property type="entry name" value="OSIALOPTASE"/>
</dbReference>
<dbReference type="SUPFAM" id="SSF53067">
    <property type="entry name" value="Actin-like ATPase domain"/>
    <property type="match status" value="2"/>
</dbReference>
<dbReference type="PROSITE" id="PS01016">
    <property type="entry name" value="GLYCOPROTEASE"/>
    <property type="match status" value="1"/>
</dbReference>
<sequence length="366" mass="38356">MLRLLAIETSCDETAVAVVEADAAWPTFAPRQLSSVVASQIDLHAAYGGVVPEVAARRHVETLPFVLESALQQAGLGMAEVDAVAVTCAPGLVGSLLVGLMAAKTLALLYNKPLIGVHHLEGHLFSGFLAAADLRPPCLGLLVSGGHTSLIWMKDYGEYQTMGRTRDDAAGEAFDKVARLLGLGYPGGPQIDRWAQQGDPDRFPLPEGKLDHPYDTSFSGLKTAVLRLVQQLQQEGQELPVADIAASFQACLTRVLTEKAVACAEALGLSTLLVTGGVAANRELRARLLEAGRQKGLRVVIPPPNLCTDNAAMIGAAGLCHWLRGETSPLELGVASRLTLEEIPALYGQGSGGCGQAPTGAAAAVF</sequence>
<keyword id="KW-0012">Acyltransferase</keyword>
<keyword id="KW-0963">Cytoplasm</keyword>
<keyword id="KW-0408">Iron</keyword>
<keyword id="KW-0479">Metal-binding</keyword>
<keyword id="KW-0808">Transferase</keyword>
<keyword id="KW-0819">tRNA processing</keyword>
<evidence type="ECO:0000255" key="1">
    <source>
        <dbReference type="HAMAP-Rule" id="MF_01445"/>
    </source>
</evidence>
<comment type="function">
    <text evidence="1">Required for the formation of a threonylcarbamoyl group on adenosine at position 37 (t(6)A37) in tRNAs that read codons beginning with adenine. Is involved in the transfer of the threonylcarbamoyl moiety of threonylcarbamoyl-AMP (TC-AMP) to the N6 group of A37, together with TsaE and TsaB. TsaD likely plays a direct catalytic role in this reaction.</text>
</comment>
<comment type="catalytic activity">
    <reaction evidence="1">
        <text>L-threonylcarbamoyladenylate + adenosine(37) in tRNA = N(6)-L-threonylcarbamoyladenosine(37) in tRNA + AMP + H(+)</text>
        <dbReference type="Rhea" id="RHEA:37059"/>
        <dbReference type="Rhea" id="RHEA-COMP:10162"/>
        <dbReference type="Rhea" id="RHEA-COMP:10163"/>
        <dbReference type="ChEBI" id="CHEBI:15378"/>
        <dbReference type="ChEBI" id="CHEBI:73682"/>
        <dbReference type="ChEBI" id="CHEBI:74411"/>
        <dbReference type="ChEBI" id="CHEBI:74418"/>
        <dbReference type="ChEBI" id="CHEBI:456215"/>
        <dbReference type="EC" id="2.3.1.234"/>
    </reaction>
</comment>
<comment type="cofactor">
    <cofactor evidence="1">
        <name>Fe(2+)</name>
        <dbReference type="ChEBI" id="CHEBI:29033"/>
    </cofactor>
    <text evidence="1">Binds 1 Fe(2+) ion per subunit.</text>
</comment>
<comment type="subcellular location">
    <subcellularLocation>
        <location evidence="1">Cytoplasm</location>
    </subcellularLocation>
</comment>
<comment type="similarity">
    <text evidence="1">Belongs to the KAE1 / TsaD family.</text>
</comment>